<organism>
    <name type="scientific">Malacoplasma penetrans (strain HF-2)</name>
    <name type="common">Mycoplasma penetrans</name>
    <dbReference type="NCBI Taxonomy" id="272633"/>
    <lineage>
        <taxon>Bacteria</taxon>
        <taxon>Bacillati</taxon>
        <taxon>Mycoplasmatota</taxon>
        <taxon>Mycoplasmoidales</taxon>
        <taxon>Mycoplasmoidaceae</taxon>
        <taxon>Malacoplasma</taxon>
    </lineage>
</organism>
<name>Y627_MALP2</name>
<protein>
    <recommendedName>
        <fullName evidence="1">UPF0246 protein MYPE6270</fullName>
    </recommendedName>
</protein>
<accession>Q8EVD7</accession>
<sequence>MKILISPSKTQNKNIDSFSNNEENILFTNKTNELNDLLIKSINNEKFNSWLELKNNSLIEETIKDIKEFKNNKAYKAIEFYDGLQFKNILYSQLSETQKTKLNESLIIISGFYGIVFPNSYIKPYRLMLGSKINIPNYKNLYDFWFKEFNQKLEELNPDKLIINLASGEYSKLIDNSIFNVINVDFKLFKSNKYVSLSTFSKQCRGYFINQFLNINLDINKIKDLDILGFKFNNELSYKNNYIFTKAY</sequence>
<reference key="1">
    <citation type="journal article" date="2002" name="Nucleic Acids Res.">
        <title>The complete genomic sequence of Mycoplasma penetrans, an intracellular bacterial pathogen in humans.</title>
        <authorList>
            <person name="Sasaki Y."/>
            <person name="Ishikawa J."/>
            <person name="Yamashita A."/>
            <person name="Oshima K."/>
            <person name="Kenri T."/>
            <person name="Furuya K."/>
            <person name="Yoshino C."/>
            <person name="Horino A."/>
            <person name="Shiba T."/>
            <person name="Sasaki T."/>
            <person name="Hattori M."/>
        </authorList>
    </citation>
    <scope>NUCLEOTIDE SEQUENCE [LARGE SCALE GENOMIC DNA]</scope>
    <source>
        <strain>HF-2</strain>
    </source>
</reference>
<dbReference type="EMBL" id="BA000026">
    <property type="protein sequence ID" value="BAC44417.1"/>
    <property type="molecule type" value="Genomic_DNA"/>
</dbReference>
<dbReference type="RefSeq" id="WP_011077449.1">
    <property type="nucleotide sequence ID" value="NC_004432.1"/>
</dbReference>
<dbReference type="SMR" id="Q8EVD7"/>
<dbReference type="KEGG" id="mpe:MYPE6270"/>
<dbReference type="eggNOG" id="COG3022">
    <property type="taxonomic scope" value="Bacteria"/>
</dbReference>
<dbReference type="HOGENOM" id="CLU_061989_2_0_14"/>
<dbReference type="InParanoid" id="Q8EVD7"/>
<dbReference type="Proteomes" id="UP000002522">
    <property type="component" value="Chromosome"/>
</dbReference>
<dbReference type="GO" id="GO:0005829">
    <property type="term" value="C:cytosol"/>
    <property type="evidence" value="ECO:0007669"/>
    <property type="project" value="TreeGrafter"/>
</dbReference>
<dbReference type="GO" id="GO:0033194">
    <property type="term" value="P:response to hydroperoxide"/>
    <property type="evidence" value="ECO:0007669"/>
    <property type="project" value="TreeGrafter"/>
</dbReference>
<dbReference type="HAMAP" id="MF_00652">
    <property type="entry name" value="UPF0246"/>
    <property type="match status" value="1"/>
</dbReference>
<dbReference type="InterPro" id="IPR005583">
    <property type="entry name" value="YaaA"/>
</dbReference>
<dbReference type="PANTHER" id="PTHR30283:SF4">
    <property type="entry name" value="PEROXIDE STRESS RESISTANCE PROTEIN YAAA"/>
    <property type="match status" value="1"/>
</dbReference>
<dbReference type="PANTHER" id="PTHR30283">
    <property type="entry name" value="PEROXIDE STRESS RESPONSE PROTEIN YAAA"/>
    <property type="match status" value="1"/>
</dbReference>
<dbReference type="Pfam" id="PF03883">
    <property type="entry name" value="H2O2_YaaD"/>
    <property type="match status" value="1"/>
</dbReference>
<gene>
    <name type="ordered locus">MYPE6270</name>
</gene>
<evidence type="ECO:0000255" key="1">
    <source>
        <dbReference type="HAMAP-Rule" id="MF_00652"/>
    </source>
</evidence>
<proteinExistence type="inferred from homology"/>
<keyword id="KW-1185">Reference proteome</keyword>
<comment type="similarity">
    <text evidence="1">Belongs to the UPF0246 family.</text>
</comment>
<feature type="chain" id="PRO_0000203989" description="UPF0246 protein MYPE6270">
    <location>
        <begin position="1"/>
        <end position="248"/>
    </location>
</feature>